<dbReference type="EC" id="1.1.1.85" evidence="1"/>
<dbReference type="EMBL" id="CP000111">
    <property type="protein sequence ID" value="ABB49854.1"/>
    <property type="molecule type" value="Genomic_DNA"/>
</dbReference>
<dbReference type="RefSeq" id="WP_011376349.1">
    <property type="nucleotide sequence ID" value="NC_007577.1"/>
</dbReference>
<dbReference type="SMR" id="Q31B91"/>
<dbReference type="STRING" id="74546.PMT9312_0794"/>
<dbReference type="KEGG" id="pmi:PMT9312_0794"/>
<dbReference type="eggNOG" id="COG0473">
    <property type="taxonomic scope" value="Bacteria"/>
</dbReference>
<dbReference type="HOGENOM" id="CLU_031953_0_3_3"/>
<dbReference type="OrthoDB" id="9806254at2"/>
<dbReference type="UniPathway" id="UPA00048">
    <property type="reaction ID" value="UER00072"/>
</dbReference>
<dbReference type="Proteomes" id="UP000002715">
    <property type="component" value="Chromosome"/>
</dbReference>
<dbReference type="GO" id="GO:0005829">
    <property type="term" value="C:cytosol"/>
    <property type="evidence" value="ECO:0007669"/>
    <property type="project" value="TreeGrafter"/>
</dbReference>
<dbReference type="GO" id="GO:0003862">
    <property type="term" value="F:3-isopropylmalate dehydrogenase activity"/>
    <property type="evidence" value="ECO:0007669"/>
    <property type="project" value="UniProtKB-UniRule"/>
</dbReference>
<dbReference type="GO" id="GO:0000287">
    <property type="term" value="F:magnesium ion binding"/>
    <property type="evidence" value="ECO:0007669"/>
    <property type="project" value="InterPro"/>
</dbReference>
<dbReference type="GO" id="GO:0051287">
    <property type="term" value="F:NAD binding"/>
    <property type="evidence" value="ECO:0007669"/>
    <property type="project" value="InterPro"/>
</dbReference>
<dbReference type="GO" id="GO:0009098">
    <property type="term" value="P:L-leucine biosynthetic process"/>
    <property type="evidence" value="ECO:0007669"/>
    <property type="project" value="UniProtKB-UniRule"/>
</dbReference>
<dbReference type="FunFam" id="3.40.718.10:FF:000028">
    <property type="entry name" value="3-isopropylmalate dehydrogenase"/>
    <property type="match status" value="1"/>
</dbReference>
<dbReference type="Gene3D" id="3.40.718.10">
    <property type="entry name" value="Isopropylmalate Dehydrogenase"/>
    <property type="match status" value="1"/>
</dbReference>
<dbReference type="HAMAP" id="MF_01033">
    <property type="entry name" value="LeuB_type1"/>
    <property type="match status" value="1"/>
</dbReference>
<dbReference type="InterPro" id="IPR019818">
    <property type="entry name" value="IsoCit/isopropylmalate_DH_CS"/>
</dbReference>
<dbReference type="InterPro" id="IPR024084">
    <property type="entry name" value="IsoPropMal-DH-like_dom"/>
</dbReference>
<dbReference type="InterPro" id="IPR004429">
    <property type="entry name" value="Isopropylmalate_DH"/>
</dbReference>
<dbReference type="NCBIfam" id="TIGR00169">
    <property type="entry name" value="leuB"/>
    <property type="match status" value="1"/>
</dbReference>
<dbReference type="PANTHER" id="PTHR42979">
    <property type="entry name" value="3-ISOPROPYLMALATE DEHYDROGENASE"/>
    <property type="match status" value="1"/>
</dbReference>
<dbReference type="PANTHER" id="PTHR42979:SF1">
    <property type="entry name" value="3-ISOPROPYLMALATE DEHYDROGENASE"/>
    <property type="match status" value="1"/>
</dbReference>
<dbReference type="Pfam" id="PF00180">
    <property type="entry name" value="Iso_dh"/>
    <property type="match status" value="1"/>
</dbReference>
<dbReference type="SMART" id="SM01329">
    <property type="entry name" value="Iso_dh"/>
    <property type="match status" value="1"/>
</dbReference>
<dbReference type="SUPFAM" id="SSF53659">
    <property type="entry name" value="Isocitrate/Isopropylmalate dehydrogenase-like"/>
    <property type="match status" value="1"/>
</dbReference>
<dbReference type="PROSITE" id="PS00470">
    <property type="entry name" value="IDH_IMDH"/>
    <property type="match status" value="1"/>
</dbReference>
<organism>
    <name type="scientific">Prochlorococcus marinus (strain MIT 9312)</name>
    <dbReference type="NCBI Taxonomy" id="74546"/>
    <lineage>
        <taxon>Bacteria</taxon>
        <taxon>Bacillati</taxon>
        <taxon>Cyanobacteriota</taxon>
        <taxon>Cyanophyceae</taxon>
        <taxon>Synechococcales</taxon>
        <taxon>Prochlorococcaceae</taxon>
        <taxon>Prochlorococcus</taxon>
    </lineage>
</organism>
<sequence>MKNYKIVLLSGDGIGPEISEVSKKVLKKLSRKHNFNIEIIEKLFGGIAYEKYGTPAPDETLDQCKKCDAVLLACVGDIKYDSLARELRPESGLLKLRSALGLFANIRPVKIRKSLVNTSTLKKEIVENVDLIVVRELIGGIYFGKPRGHITNTKIPKAFNTMVYDSAEIERITEIAIKIANQRNKKICSVDKSNVLEVSQLWRDTVLNITLKDKNISLSNMYVDNAAMQLVRDPSQFDVILTSNLFGDILSDLAAMLTGSIGMLPSASLNNNGPGVFEPVHGSAPDIAGKNIANPIAMLLSASMMLKIGLNEEEAAKNLETAVDKVLAEGFRTADLADGSSEVLSCSEIGDKIIDEI</sequence>
<reference key="1">
    <citation type="journal article" date="2006" name="Science">
        <title>Genomic islands and the ecology and evolution of Prochlorococcus.</title>
        <authorList>
            <person name="Coleman M.L."/>
            <person name="Sullivan M.B."/>
            <person name="Martiny A.C."/>
            <person name="Steglich C."/>
            <person name="Barry K."/>
            <person name="Delong E.F."/>
            <person name="Chisholm S.W."/>
        </authorList>
    </citation>
    <scope>NUCLEOTIDE SEQUENCE [LARGE SCALE GENOMIC DNA]</scope>
    <source>
        <strain>MIT 9312</strain>
    </source>
</reference>
<protein>
    <recommendedName>
        <fullName evidence="1">3-isopropylmalate dehydrogenase</fullName>
        <ecNumber evidence="1">1.1.1.85</ecNumber>
    </recommendedName>
    <alternativeName>
        <fullName evidence="1">3-IPM-DH</fullName>
    </alternativeName>
    <alternativeName>
        <fullName evidence="1">Beta-IPM dehydrogenase</fullName>
        <shortName evidence="1">IMDH</shortName>
    </alternativeName>
</protein>
<comment type="function">
    <text evidence="1">Catalyzes the oxidation of 3-carboxy-2-hydroxy-4-methylpentanoate (3-isopropylmalate) to 3-carboxy-4-methyl-2-oxopentanoate. The product decarboxylates to 4-methyl-2 oxopentanoate.</text>
</comment>
<comment type="catalytic activity">
    <reaction evidence="1">
        <text>(2R,3S)-3-isopropylmalate + NAD(+) = 4-methyl-2-oxopentanoate + CO2 + NADH</text>
        <dbReference type="Rhea" id="RHEA:32271"/>
        <dbReference type="ChEBI" id="CHEBI:16526"/>
        <dbReference type="ChEBI" id="CHEBI:17865"/>
        <dbReference type="ChEBI" id="CHEBI:35121"/>
        <dbReference type="ChEBI" id="CHEBI:57540"/>
        <dbReference type="ChEBI" id="CHEBI:57945"/>
        <dbReference type="EC" id="1.1.1.85"/>
    </reaction>
</comment>
<comment type="cofactor">
    <cofactor evidence="1">
        <name>Mg(2+)</name>
        <dbReference type="ChEBI" id="CHEBI:18420"/>
    </cofactor>
    <cofactor evidence="1">
        <name>Mn(2+)</name>
        <dbReference type="ChEBI" id="CHEBI:29035"/>
    </cofactor>
    <text evidence="1">Binds 1 Mg(2+) or Mn(2+) ion per subunit.</text>
</comment>
<comment type="pathway">
    <text evidence="1">Amino-acid biosynthesis; L-leucine biosynthesis; L-leucine from 3-methyl-2-oxobutanoate: step 3/4.</text>
</comment>
<comment type="subunit">
    <text evidence="1">Homodimer.</text>
</comment>
<comment type="subcellular location">
    <subcellularLocation>
        <location evidence="1">Cytoplasm</location>
    </subcellularLocation>
</comment>
<comment type="similarity">
    <text evidence="1">Belongs to the isocitrate and isopropylmalate dehydrogenases family. LeuB type 1 subfamily.</text>
</comment>
<keyword id="KW-0028">Amino-acid biosynthesis</keyword>
<keyword id="KW-0100">Branched-chain amino acid biosynthesis</keyword>
<keyword id="KW-0963">Cytoplasm</keyword>
<keyword id="KW-0432">Leucine biosynthesis</keyword>
<keyword id="KW-0460">Magnesium</keyword>
<keyword id="KW-0464">Manganese</keyword>
<keyword id="KW-0479">Metal-binding</keyword>
<keyword id="KW-0520">NAD</keyword>
<keyword id="KW-0560">Oxidoreductase</keyword>
<name>LEU3_PROM9</name>
<proteinExistence type="inferred from homology"/>
<evidence type="ECO:0000255" key="1">
    <source>
        <dbReference type="HAMAP-Rule" id="MF_01033"/>
    </source>
</evidence>
<accession>Q31B91</accession>
<feature type="chain" id="PRO_0000250125" description="3-isopropylmalate dehydrogenase">
    <location>
        <begin position="1"/>
        <end position="357"/>
    </location>
</feature>
<feature type="binding site" evidence="1">
    <location>
        <position position="97"/>
    </location>
    <ligand>
        <name>substrate</name>
    </ligand>
</feature>
<feature type="binding site" evidence="1">
    <location>
        <position position="107"/>
    </location>
    <ligand>
        <name>substrate</name>
    </ligand>
</feature>
<feature type="binding site" evidence="1">
    <location>
        <position position="135"/>
    </location>
    <ligand>
        <name>substrate</name>
    </ligand>
</feature>
<feature type="binding site" evidence="1">
    <location>
        <position position="224"/>
    </location>
    <ligand>
        <name>Mg(2+)</name>
        <dbReference type="ChEBI" id="CHEBI:18420"/>
    </ligand>
</feature>
<feature type="binding site" evidence="1">
    <location>
        <position position="224"/>
    </location>
    <ligand>
        <name>substrate</name>
    </ligand>
</feature>
<feature type="binding site" evidence="1">
    <location>
        <position position="248"/>
    </location>
    <ligand>
        <name>Mg(2+)</name>
        <dbReference type="ChEBI" id="CHEBI:18420"/>
    </ligand>
</feature>
<feature type="binding site" evidence="1">
    <location>
        <position position="252"/>
    </location>
    <ligand>
        <name>Mg(2+)</name>
        <dbReference type="ChEBI" id="CHEBI:18420"/>
    </ligand>
</feature>
<feature type="binding site" evidence="1">
    <location>
        <begin position="282"/>
        <end position="294"/>
    </location>
    <ligand>
        <name>NAD(+)</name>
        <dbReference type="ChEBI" id="CHEBI:57540"/>
    </ligand>
</feature>
<feature type="site" description="Important for catalysis" evidence="1">
    <location>
        <position position="142"/>
    </location>
</feature>
<feature type="site" description="Important for catalysis" evidence="1">
    <location>
        <position position="192"/>
    </location>
</feature>
<gene>
    <name evidence="1" type="primary">leuB</name>
    <name type="ordered locus">PMT9312_0794</name>
</gene>